<reference key="1">
    <citation type="submission" date="2003-03" db="EMBL/GenBank/DDBJ databases">
        <title>The complete genome sequence of Neisseria gonorrhoeae.</title>
        <authorList>
            <person name="Lewis L.A."/>
            <person name="Gillaspy A.F."/>
            <person name="McLaughlin R.E."/>
            <person name="Gipson M."/>
            <person name="Ducey T.F."/>
            <person name="Ownbey T."/>
            <person name="Hartman K."/>
            <person name="Nydick C."/>
            <person name="Carson M.B."/>
            <person name="Vaughn J."/>
            <person name="Thomson C."/>
            <person name="Song L."/>
            <person name="Lin S."/>
            <person name="Yuan X."/>
            <person name="Najar F."/>
            <person name="Zhan M."/>
            <person name="Ren Q."/>
            <person name="Zhu H."/>
            <person name="Qi S."/>
            <person name="Kenton S.M."/>
            <person name="Lai H."/>
            <person name="White J.D."/>
            <person name="Clifton S."/>
            <person name="Roe B.A."/>
            <person name="Dyer D.W."/>
        </authorList>
    </citation>
    <scope>NUCLEOTIDE SEQUENCE [LARGE SCALE GENOMIC DNA]</scope>
    <source>
        <strain>ATCC 700825 / FA 1090</strain>
    </source>
</reference>
<evidence type="ECO:0000255" key="1">
    <source>
        <dbReference type="HAMAP-Rule" id="MF_01106"/>
    </source>
</evidence>
<proteinExistence type="inferred from homology"/>
<comment type="function">
    <text evidence="1">Catalyzes two activities which are involved in the cyclic version of arginine biosynthesis: the synthesis of N-acetylglutamate from glutamate and acetyl-CoA as the acetyl donor, and of ornithine by transacetylation between N(2)-acetylornithine and glutamate.</text>
</comment>
<comment type="catalytic activity">
    <reaction evidence="1">
        <text>N(2)-acetyl-L-ornithine + L-glutamate = N-acetyl-L-glutamate + L-ornithine</text>
        <dbReference type="Rhea" id="RHEA:15349"/>
        <dbReference type="ChEBI" id="CHEBI:29985"/>
        <dbReference type="ChEBI" id="CHEBI:44337"/>
        <dbReference type="ChEBI" id="CHEBI:46911"/>
        <dbReference type="ChEBI" id="CHEBI:57805"/>
        <dbReference type="EC" id="2.3.1.35"/>
    </reaction>
</comment>
<comment type="catalytic activity">
    <reaction evidence="1">
        <text>L-glutamate + acetyl-CoA = N-acetyl-L-glutamate + CoA + H(+)</text>
        <dbReference type="Rhea" id="RHEA:24292"/>
        <dbReference type="ChEBI" id="CHEBI:15378"/>
        <dbReference type="ChEBI" id="CHEBI:29985"/>
        <dbReference type="ChEBI" id="CHEBI:44337"/>
        <dbReference type="ChEBI" id="CHEBI:57287"/>
        <dbReference type="ChEBI" id="CHEBI:57288"/>
        <dbReference type="EC" id="2.3.1.1"/>
    </reaction>
</comment>
<comment type="pathway">
    <text evidence="1">Amino-acid biosynthesis; L-arginine biosynthesis; L-ornithine and N-acetyl-L-glutamate from L-glutamate and N(2)-acetyl-L-ornithine (cyclic): step 1/1.</text>
</comment>
<comment type="pathway">
    <text evidence="1">Amino-acid biosynthesis; L-arginine biosynthesis; N(2)-acetyl-L-ornithine from L-glutamate: step 1/4.</text>
</comment>
<comment type="subunit">
    <text evidence="1">Heterotetramer of two alpha and two beta chains.</text>
</comment>
<comment type="subcellular location">
    <subcellularLocation>
        <location evidence="1">Cytoplasm</location>
    </subcellularLocation>
</comment>
<comment type="similarity">
    <text evidence="1">Belongs to the ArgJ family.</text>
</comment>
<organism>
    <name type="scientific">Neisseria gonorrhoeae (strain ATCC 700825 / FA 1090)</name>
    <dbReference type="NCBI Taxonomy" id="242231"/>
    <lineage>
        <taxon>Bacteria</taxon>
        <taxon>Pseudomonadati</taxon>
        <taxon>Pseudomonadota</taxon>
        <taxon>Betaproteobacteria</taxon>
        <taxon>Neisseriales</taxon>
        <taxon>Neisseriaceae</taxon>
        <taxon>Neisseria</taxon>
    </lineage>
</organism>
<dbReference type="EC" id="2.3.1.35" evidence="1"/>
<dbReference type="EC" id="2.3.1.1" evidence="1"/>
<dbReference type="EMBL" id="AE004969">
    <property type="protein sequence ID" value="AAW89854.1"/>
    <property type="molecule type" value="Genomic_DNA"/>
</dbReference>
<dbReference type="RefSeq" id="WP_003691802.1">
    <property type="nucleotide sequence ID" value="NC_002946.2"/>
</dbReference>
<dbReference type="RefSeq" id="YP_208266.1">
    <property type="nucleotide sequence ID" value="NC_002946.2"/>
</dbReference>
<dbReference type="SMR" id="Q5F7I3"/>
<dbReference type="STRING" id="242231.NGO_1194"/>
<dbReference type="MEROPS" id="T05.001"/>
<dbReference type="GeneID" id="66753914"/>
<dbReference type="KEGG" id="ngo:NGO_1194"/>
<dbReference type="PATRIC" id="fig|242231.10.peg.1401"/>
<dbReference type="HOGENOM" id="CLU_027172_1_0_4"/>
<dbReference type="UniPathway" id="UPA00068">
    <property type="reaction ID" value="UER00106"/>
</dbReference>
<dbReference type="UniPathway" id="UPA00068">
    <property type="reaction ID" value="UER00111"/>
</dbReference>
<dbReference type="Proteomes" id="UP000000535">
    <property type="component" value="Chromosome"/>
</dbReference>
<dbReference type="GO" id="GO:0005737">
    <property type="term" value="C:cytoplasm"/>
    <property type="evidence" value="ECO:0007669"/>
    <property type="project" value="UniProtKB-SubCell"/>
</dbReference>
<dbReference type="GO" id="GO:0004358">
    <property type="term" value="F:glutamate N-acetyltransferase activity"/>
    <property type="evidence" value="ECO:0007669"/>
    <property type="project" value="UniProtKB-UniRule"/>
</dbReference>
<dbReference type="GO" id="GO:0004042">
    <property type="term" value="F:L-glutamate N-acetyltransferase activity"/>
    <property type="evidence" value="ECO:0007669"/>
    <property type="project" value="UniProtKB-UniRule"/>
</dbReference>
<dbReference type="GO" id="GO:0006526">
    <property type="term" value="P:L-arginine biosynthetic process"/>
    <property type="evidence" value="ECO:0007669"/>
    <property type="project" value="UniProtKB-UniRule"/>
</dbReference>
<dbReference type="GO" id="GO:0006592">
    <property type="term" value="P:ornithine biosynthetic process"/>
    <property type="evidence" value="ECO:0007669"/>
    <property type="project" value="TreeGrafter"/>
</dbReference>
<dbReference type="CDD" id="cd02152">
    <property type="entry name" value="OAT"/>
    <property type="match status" value="1"/>
</dbReference>
<dbReference type="FunFam" id="3.10.20.340:FF:000001">
    <property type="entry name" value="Arginine biosynthesis bifunctional protein ArgJ, chloroplastic"/>
    <property type="match status" value="1"/>
</dbReference>
<dbReference type="FunFam" id="3.60.70.12:FF:000001">
    <property type="entry name" value="Arginine biosynthesis bifunctional protein ArgJ, chloroplastic"/>
    <property type="match status" value="1"/>
</dbReference>
<dbReference type="Gene3D" id="3.10.20.340">
    <property type="entry name" value="ArgJ beta chain, C-terminal domain"/>
    <property type="match status" value="1"/>
</dbReference>
<dbReference type="Gene3D" id="3.60.70.12">
    <property type="entry name" value="L-amino peptidase D-ALA esterase/amidase"/>
    <property type="match status" value="1"/>
</dbReference>
<dbReference type="HAMAP" id="MF_01106">
    <property type="entry name" value="ArgJ"/>
    <property type="match status" value="1"/>
</dbReference>
<dbReference type="InterPro" id="IPR002813">
    <property type="entry name" value="Arg_biosynth_ArgJ"/>
</dbReference>
<dbReference type="InterPro" id="IPR016117">
    <property type="entry name" value="ArgJ-like_dom_sf"/>
</dbReference>
<dbReference type="InterPro" id="IPR042195">
    <property type="entry name" value="ArgJ_beta_C"/>
</dbReference>
<dbReference type="NCBIfam" id="TIGR00120">
    <property type="entry name" value="ArgJ"/>
    <property type="match status" value="1"/>
</dbReference>
<dbReference type="NCBIfam" id="NF003802">
    <property type="entry name" value="PRK05388.1"/>
    <property type="match status" value="1"/>
</dbReference>
<dbReference type="PANTHER" id="PTHR23100">
    <property type="entry name" value="ARGININE BIOSYNTHESIS BIFUNCTIONAL PROTEIN ARGJ"/>
    <property type="match status" value="1"/>
</dbReference>
<dbReference type="PANTHER" id="PTHR23100:SF0">
    <property type="entry name" value="ARGININE BIOSYNTHESIS BIFUNCTIONAL PROTEIN ARGJ, MITOCHONDRIAL"/>
    <property type="match status" value="1"/>
</dbReference>
<dbReference type="Pfam" id="PF01960">
    <property type="entry name" value="ArgJ"/>
    <property type="match status" value="1"/>
</dbReference>
<dbReference type="SUPFAM" id="SSF56266">
    <property type="entry name" value="DmpA/ArgJ-like"/>
    <property type="match status" value="1"/>
</dbReference>
<keyword id="KW-0012">Acyltransferase</keyword>
<keyword id="KW-0028">Amino-acid biosynthesis</keyword>
<keyword id="KW-0055">Arginine biosynthesis</keyword>
<keyword id="KW-0068">Autocatalytic cleavage</keyword>
<keyword id="KW-0963">Cytoplasm</keyword>
<keyword id="KW-0511">Multifunctional enzyme</keyword>
<keyword id="KW-1185">Reference proteome</keyword>
<keyword id="KW-0808">Transferase</keyword>
<gene>
    <name evidence="1" type="primary">argJ</name>
    <name type="ordered locus">NGO_1194</name>
</gene>
<feature type="chain" id="PRO_0000227234" description="Arginine biosynthesis bifunctional protein ArgJ alpha chain" evidence="1">
    <location>
        <begin position="1"/>
        <end position="189"/>
    </location>
</feature>
<feature type="chain" id="PRO_0000227235" description="Arginine biosynthesis bifunctional protein ArgJ beta chain" evidence="1">
    <location>
        <begin position="190"/>
        <end position="406"/>
    </location>
</feature>
<feature type="active site" description="Nucleophile" evidence="1">
    <location>
        <position position="190"/>
    </location>
</feature>
<feature type="binding site" evidence="1">
    <location>
        <position position="152"/>
    </location>
    <ligand>
        <name>substrate</name>
    </ligand>
</feature>
<feature type="binding site" evidence="1">
    <location>
        <position position="179"/>
    </location>
    <ligand>
        <name>substrate</name>
    </ligand>
</feature>
<feature type="binding site" evidence="1">
    <location>
        <position position="190"/>
    </location>
    <ligand>
        <name>substrate</name>
    </ligand>
</feature>
<feature type="binding site" evidence="1">
    <location>
        <position position="277"/>
    </location>
    <ligand>
        <name>substrate</name>
    </ligand>
</feature>
<feature type="binding site" evidence="1">
    <location>
        <position position="401"/>
    </location>
    <ligand>
        <name>substrate</name>
    </ligand>
</feature>
<feature type="binding site" evidence="1">
    <location>
        <position position="406"/>
    </location>
    <ligand>
        <name>substrate</name>
    </ligand>
</feature>
<feature type="site" description="Involved in the stabilization of negative charge on the oxyanion by the formation of the oxyanion hole" evidence="1">
    <location>
        <position position="119"/>
    </location>
</feature>
<feature type="site" description="Involved in the stabilization of negative charge on the oxyanion by the formation of the oxyanion hole" evidence="1">
    <location>
        <position position="120"/>
    </location>
</feature>
<feature type="site" description="Cleavage; by autolysis" evidence="1">
    <location>
        <begin position="189"/>
        <end position="190"/>
    </location>
</feature>
<accession>Q5F7I3</accession>
<sequence length="406" mass="42851">MAVNLTEKTAEQLPDIDGIALYTAQAGVKKPGHTDLTLIAVAAGSTVGAVFTTNRFCAAPVHIAKSHLFDEDGVRALVINTGNANAGTGAQGRIDALAVCAAAARQIGCKPNQVMPFSTGVILEPLPADKIIAALPKMQPAFWNEAARAIMTTDTVPKAASREGKVGDQHTVRATGIAKGSGMIHPNMATMLGFIATDAKVSQPVLQLMTQEIADETFNTITVDGDTSTNDSFVIIATGKNSQSEIDNIADPRYAQLKELLCSLALELAQAIVRDGEGATKFITVRVENAKTCDEARQAAYAAARSPLVKTAFFASDPNLGRLLAAIGYADVADLDTDLVEMYLDDILVAEHGGRAASYTEAQGQAVMSKDEITVRIKLHRGQAAATVYTCDLSHGYVSINADYRS</sequence>
<name>ARGJ_NEIG1</name>
<protein>
    <recommendedName>
        <fullName evidence="1">Arginine biosynthesis bifunctional protein ArgJ</fullName>
    </recommendedName>
    <domain>
        <recommendedName>
            <fullName evidence="1">Glutamate N-acetyltransferase</fullName>
            <ecNumber evidence="1">2.3.1.35</ecNumber>
        </recommendedName>
        <alternativeName>
            <fullName evidence="1">Ornithine acetyltransferase</fullName>
            <shortName evidence="1">OATase</shortName>
        </alternativeName>
        <alternativeName>
            <fullName evidence="1">Ornithine transacetylase</fullName>
        </alternativeName>
    </domain>
    <domain>
        <recommendedName>
            <fullName evidence="1">Amino-acid acetyltransferase</fullName>
            <ecNumber evidence="1">2.3.1.1</ecNumber>
        </recommendedName>
        <alternativeName>
            <fullName evidence="1">N-acetylglutamate synthase</fullName>
            <shortName evidence="1">AGSase</shortName>
        </alternativeName>
    </domain>
    <component>
        <recommendedName>
            <fullName evidence="1">Arginine biosynthesis bifunctional protein ArgJ alpha chain</fullName>
        </recommendedName>
    </component>
    <component>
        <recommendedName>
            <fullName evidence="1">Arginine biosynthesis bifunctional protein ArgJ beta chain</fullName>
        </recommendedName>
    </component>
</protein>